<sequence>MARKTNTRKRRVKKNIESGIAHIRSTFNNTIVMITDTHGNALAWSSAGSLGFKGSRKSTPFAAQMAAESAAKSAQEHGLKTLEVTVKGPGSGREAAIRALQAAGLEVTAIKDVTPVPHNGCRPPKRRRV</sequence>
<feature type="chain" id="PRO_1000165553" description="Small ribosomal subunit protein uS11">
    <location>
        <begin position="1"/>
        <end position="129"/>
    </location>
</feature>
<keyword id="KW-0687">Ribonucleoprotein</keyword>
<keyword id="KW-0689">Ribosomal protein</keyword>
<keyword id="KW-0694">RNA-binding</keyword>
<keyword id="KW-0699">rRNA-binding</keyword>
<gene>
    <name evidence="1" type="primary">rpsK</name>
    <name type="ordered locus">LMHCC_2927</name>
</gene>
<comment type="function">
    <text evidence="1">Located on the platform of the 30S subunit, it bridges several disparate RNA helices of the 16S rRNA. Forms part of the Shine-Dalgarno cleft in the 70S ribosome.</text>
</comment>
<comment type="subunit">
    <text evidence="1">Part of the 30S ribosomal subunit. Interacts with proteins S7 and S18. Binds to IF-3.</text>
</comment>
<comment type="similarity">
    <text evidence="1">Belongs to the universal ribosomal protein uS11 family.</text>
</comment>
<evidence type="ECO:0000255" key="1">
    <source>
        <dbReference type="HAMAP-Rule" id="MF_01310"/>
    </source>
</evidence>
<evidence type="ECO:0000305" key="2"/>
<protein>
    <recommendedName>
        <fullName evidence="1">Small ribosomal subunit protein uS11</fullName>
    </recommendedName>
    <alternativeName>
        <fullName evidence="2">30S ribosomal protein S11</fullName>
    </alternativeName>
</protein>
<reference key="1">
    <citation type="journal article" date="2011" name="J. Bacteriol.">
        <title>Genome sequence of lineage III Listeria monocytogenes strain HCC23.</title>
        <authorList>
            <person name="Steele C.L."/>
            <person name="Donaldson J.R."/>
            <person name="Paul D."/>
            <person name="Banes M.M."/>
            <person name="Arick T."/>
            <person name="Bridges S.M."/>
            <person name="Lawrence M.L."/>
        </authorList>
    </citation>
    <scope>NUCLEOTIDE SEQUENCE [LARGE SCALE GENOMIC DNA]</scope>
    <source>
        <strain>HCC23</strain>
    </source>
</reference>
<name>RS11_LISMH</name>
<accession>B8DB33</accession>
<proteinExistence type="inferred from homology"/>
<dbReference type="EMBL" id="CP001175">
    <property type="protein sequence ID" value="ACK41258.1"/>
    <property type="molecule type" value="Genomic_DNA"/>
</dbReference>
<dbReference type="RefSeq" id="WP_003720926.1">
    <property type="nucleotide sequence ID" value="NC_011660.1"/>
</dbReference>
<dbReference type="SMR" id="B8DB33"/>
<dbReference type="GeneID" id="93240488"/>
<dbReference type="KEGG" id="lmh:LMHCC_2927"/>
<dbReference type="HOGENOM" id="CLU_072439_5_0_9"/>
<dbReference type="GO" id="GO:1990904">
    <property type="term" value="C:ribonucleoprotein complex"/>
    <property type="evidence" value="ECO:0007669"/>
    <property type="project" value="UniProtKB-KW"/>
</dbReference>
<dbReference type="GO" id="GO:0005840">
    <property type="term" value="C:ribosome"/>
    <property type="evidence" value="ECO:0007669"/>
    <property type="project" value="UniProtKB-KW"/>
</dbReference>
<dbReference type="GO" id="GO:0019843">
    <property type="term" value="F:rRNA binding"/>
    <property type="evidence" value="ECO:0007669"/>
    <property type="project" value="UniProtKB-UniRule"/>
</dbReference>
<dbReference type="GO" id="GO:0003735">
    <property type="term" value="F:structural constituent of ribosome"/>
    <property type="evidence" value="ECO:0007669"/>
    <property type="project" value="InterPro"/>
</dbReference>
<dbReference type="GO" id="GO:0006412">
    <property type="term" value="P:translation"/>
    <property type="evidence" value="ECO:0007669"/>
    <property type="project" value="UniProtKB-UniRule"/>
</dbReference>
<dbReference type="FunFam" id="3.30.420.80:FF:000001">
    <property type="entry name" value="30S ribosomal protein S11"/>
    <property type="match status" value="1"/>
</dbReference>
<dbReference type="Gene3D" id="3.30.420.80">
    <property type="entry name" value="Ribosomal protein S11"/>
    <property type="match status" value="1"/>
</dbReference>
<dbReference type="HAMAP" id="MF_01310">
    <property type="entry name" value="Ribosomal_uS11"/>
    <property type="match status" value="1"/>
</dbReference>
<dbReference type="InterPro" id="IPR001971">
    <property type="entry name" value="Ribosomal_uS11"/>
</dbReference>
<dbReference type="InterPro" id="IPR019981">
    <property type="entry name" value="Ribosomal_uS11_bac-type"/>
</dbReference>
<dbReference type="InterPro" id="IPR018102">
    <property type="entry name" value="Ribosomal_uS11_CS"/>
</dbReference>
<dbReference type="InterPro" id="IPR036967">
    <property type="entry name" value="Ribosomal_uS11_sf"/>
</dbReference>
<dbReference type="NCBIfam" id="NF003698">
    <property type="entry name" value="PRK05309.1"/>
    <property type="match status" value="1"/>
</dbReference>
<dbReference type="NCBIfam" id="TIGR03632">
    <property type="entry name" value="uS11_bact"/>
    <property type="match status" value="1"/>
</dbReference>
<dbReference type="PANTHER" id="PTHR11759">
    <property type="entry name" value="40S RIBOSOMAL PROTEIN S14/30S RIBOSOMAL PROTEIN S11"/>
    <property type="match status" value="1"/>
</dbReference>
<dbReference type="Pfam" id="PF00411">
    <property type="entry name" value="Ribosomal_S11"/>
    <property type="match status" value="1"/>
</dbReference>
<dbReference type="PIRSF" id="PIRSF002131">
    <property type="entry name" value="Ribosomal_S11"/>
    <property type="match status" value="1"/>
</dbReference>
<dbReference type="SUPFAM" id="SSF53137">
    <property type="entry name" value="Translational machinery components"/>
    <property type="match status" value="1"/>
</dbReference>
<dbReference type="PROSITE" id="PS00054">
    <property type="entry name" value="RIBOSOMAL_S11"/>
    <property type="match status" value="1"/>
</dbReference>
<organism>
    <name type="scientific">Listeria monocytogenes serotype 4a (strain HCC23)</name>
    <dbReference type="NCBI Taxonomy" id="552536"/>
    <lineage>
        <taxon>Bacteria</taxon>
        <taxon>Bacillati</taxon>
        <taxon>Bacillota</taxon>
        <taxon>Bacilli</taxon>
        <taxon>Bacillales</taxon>
        <taxon>Listeriaceae</taxon>
        <taxon>Listeria</taxon>
    </lineage>
</organism>